<protein>
    <recommendedName>
        <fullName>Heme exporter protein C</fullName>
    </recommendedName>
    <alternativeName>
        <fullName>Cytochrome c-type biogenesis protein CcmC</fullName>
    </alternativeName>
</protein>
<organism>
    <name type="scientific">Escherichia coli O6:H1 (strain CFT073 / ATCC 700928 / UPEC)</name>
    <dbReference type="NCBI Taxonomy" id="199310"/>
    <lineage>
        <taxon>Bacteria</taxon>
        <taxon>Pseudomonadati</taxon>
        <taxon>Pseudomonadota</taxon>
        <taxon>Gammaproteobacteria</taxon>
        <taxon>Enterobacterales</taxon>
        <taxon>Enterobacteriaceae</taxon>
        <taxon>Escherichia</taxon>
    </lineage>
</organism>
<accession>P0ABM2</accession>
<accession>P33929</accession>
<sequence length="245" mass="27885">MWKTLHQLAIPPRLYQICGWFIPWLAIASVVVLTVGWIWGFGFAPADYQQGNSYRIIYLHVPAAIWSMGIYASMAVAAFIGLVWQMKMANLAVAAMAPIGAVFTFIALVTGSAWGKPMWGTWWVWDARLTSELVLLFLYVGVIALWHAFDDRRLAGRAAGILVLIGVVNLPIIHYSVEWWNTLHQGSTRMQQSIDPAMRSPLRWSIFGFLLLSATLTLMRMRNLILLMEKRRPWVSELILKRGRK</sequence>
<comment type="function">
    <text evidence="1">Required for the export of heme to the periplasm for the biogenesis of c-type cytochromes.</text>
</comment>
<comment type="subcellular location">
    <subcellularLocation>
        <location evidence="1">Cell inner membrane</location>
        <topology evidence="1">Multi-pass membrane protein</topology>
    </subcellularLocation>
</comment>
<comment type="similarity">
    <text evidence="3">Belongs to the CcmC/CycZ/HelC family.</text>
</comment>
<comment type="sequence caution" evidence="3">
    <conflict type="erroneous initiation">
        <sequence resource="EMBL-CDS" id="AAN81190"/>
    </conflict>
</comment>
<name>CCMC_ECOL6</name>
<reference key="1">
    <citation type="journal article" date="2002" name="Proc. Natl. Acad. Sci. U.S.A.">
        <title>Extensive mosaic structure revealed by the complete genome sequence of uropathogenic Escherichia coli.</title>
        <authorList>
            <person name="Welch R.A."/>
            <person name="Burland V."/>
            <person name="Plunkett G. III"/>
            <person name="Redford P."/>
            <person name="Roesch P."/>
            <person name="Rasko D."/>
            <person name="Buckles E.L."/>
            <person name="Liou S.-R."/>
            <person name="Boutin A."/>
            <person name="Hackett J."/>
            <person name="Stroud D."/>
            <person name="Mayhew G.F."/>
            <person name="Rose D.J."/>
            <person name="Zhou S."/>
            <person name="Schwartz D.C."/>
            <person name="Perna N.T."/>
            <person name="Mobley H.L.T."/>
            <person name="Donnenberg M.S."/>
            <person name="Blattner F.R."/>
        </authorList>
    </citation>
    <scope>NUCLEOTIDE SEQUENCE [LARGE SCALE GENOMIC DNA]</scope>
    <source>
        <strain>CFT073 / ATCC 700928 / UPEC</strain>
    </source>
</reference>
<proteinExistence type="inferred from homology"/>
<keyword id="KW-0997">Cell inner membrane</keyword>
<keyword id="KW-1003">Cell membrane</keyword>
<keyword id="KW-0201">Cytochrome c-type biogenesis</keyword>
<keyword id="KW-0472">Membrane</keyword>
<keyword id="KW-1185">Reference proteome</keyword>
<keyword id="KW-0812">Transmembrane</keyword>
<keyword id="KW-1133">Transmembrane helix</keyword>
<keyword id="KW-0813">Transport</keyword>
<gene>
    <name type="primary">ccmC</name>
    <name type="ordered locus">c2736</name>
</gene>
<dbReference type="EMBL" id="AE014075">
    <property type="protein sequence ID" value="AAN81190.1"/>
    <property type="status" value="ALT_INIT"/>
    <property type="molecule type" value="Genomic_DNA"/>
</dbReference>
<dbReference type="RefSeq" id="WP_001295447.1">
    <property type="nucleotide sequence ID" value="NZ_CP051263.1"/>
</dbReference>
<dbReference type="SMR" id="P0ABM2"/>
<dbReference type="STRING" id="199310.c2736"/>
<dbReference type="GeneID" id="93774979"/>
<dbReference type="KEGG" id="ecc:c2736"/>
<dbReference type="eggNOG" id="COG0755">
    <property type="taxonomic scope" value="Bacteria"/>
</dbReference>
<dbReference type="HOGENOM" id="CLU_066538_2_0_6"/>
<dbReference type="Proteomes" id="UP000001410">
    <property type="component" value="Chromosome"/>
</dbReference>
<dbReference type="GO" id="GO:0005886">
    <property type="term" value="C:plasma membrane"/>
    <property type="evidence" value="ECO:0007669"/>
    <property type="project" value="UniProtKB-SubCell"/>
</dbReference>
<dbReference type="GO" id="GO:0020037">
    <property type="term" value="F:heme binding"/>
    <property type="evidence" value="ECO:0007669"/>
    <property type="project" value="InterPro"/>
</dbReference>
<dbReference type="GO" id="GO:0015232">
    <property type="term" value="F:heme transmembrane transporter activity"/>
    <property type="evidence" value="ECO:0007669"/>
    <property type="project" value="InterPro"/>
</dbReference>
<dbReference type="GO" id="GO:0017004">
    <property type="term" value="P:cytochrome complex assembly"/>
    <property type="evidence" value="ECO:0007669"/>
    <property type="project" value="UniProtKB-KW"/>
</dbReference>
<dbReference type="InterPro" id="IPR002541">
    <property type="entry name" value="Cyt_c_assembly"/>
</dbReference>
<dbReference type="InterPro" id="IPR003557">
    <property type="entry name" value="Cyt_c_biogenesis_CcmC"/>
</dbReference>
<dbReference type="InterPro" id="IPR045062">
    <property type="entry name" value="Cyt_c_biogenesis_CcsA/CcmC"/>
</dbReference>
<dbReference type="NCBIfam" id="TIGR01191">
    <property type="entry name" value="ccmC"/>
    <property type="match status" value="1"/>
</dbReference>
<dbReference type="PANTHER" id="PTHR30071:SF1">
    <property type="entry name" value="CYTOCHROME B_B6 PROTEIN-RELATED"/>
    <property type="match status" value="1"/>
</dbReference>
<dbReference type="PANTHER" id="PTHR30071">
    <property type="entry name" value="HEME EXPORTER PROTEIN C"/>
    <property type="match status" value="1"/>
</dbReference>
<dbReference type="Pfam" id="PF01578">
    <property type="entry name" value="Cytochrom_C_asm"/>
    <property type="match status" value="1"/>
</dbReference>
<dbReference type="PRINTS" id="PR01386">
    <property type="entry name" value="CCMCBIOGNSIS"/>
</dbReference>
<feature type="chain" id="PRO_0000201553" description="Heme exporter protein C">
    <location>
        <begin position="1"/>
        <end position="245"/>
    </location>
</feature>
<feature type="topological domain" description="Cytoplasmic" evidence="2">
    <location>
        <begin position="1"/>
        <end position="20"/>
    </location>
</feature>
<feature type="transmembrane region" description="Helical" evidence="2">
    <location>
        <begin position="21"/>
        <end position="41"/>
    </location>
</feature>
<feature type="topological domain" description="Periplasmic" evidence="2">
    <location>
        <begin position="42"/>
        <end position="63"/>
    </location>
</feature>
<feature type="transmembrane region" description="Helical" evidence="2">
    <location>
        <begin position="64"/>
        <end position="84"/>
    </location>
</feature>
<feature type="topological domain" description="Cytoplasmic" evidence="2">
    <location>
        <begin position="85"/>
        <end position="90"/>
    </location>
</feature>
<feature type="transmembrane region" description="Helical" evidence="2">
    <location>
        <begin position="91"/>
        <end position="111"/>
    </location>
</feature>
<feature type="topological domain" description="Periplasmic" evidence="2">
    <location>
        <begin position="112"/>
        <end position="128"/>
    </location>
</feature>
<feature type="transmembrane region" description="Helical" evidence="2">
    <location>
        <begin position="129"/>
        <end position="149"/>
    </location>
</feature>
<feature type="topological domain" description="Cytoplasmic" evidence="2">
    <location>
        <begin position="150"/>
        <end position="159"/>
    </location>
</feature>
<feature type="transmembrane region" description="Helical" evidence="2">
    <location>
        <begin position="160"/>
        <end position="180"/>
    </location>
</feature>
<feature type="topological domain" description="Periplasmic" evidence="2">
    <location>
        <begin position="181"/>
        <end position="205"/>
    </location>
</feature>
<feature type="transmembrane region" description="Helical" evidence="2">
    <location>
        <begin position="206"/>
        <end position="226"/>
    </location>
</feature>
<feature type="topological domain" description="Cytoplasmic" evidence="2">
    <location>
        <begin position="227"/>
        <end position="245"/>
    </location>
</feature>
<evidence type="ECO:0000250" key="1"/>
<evidence type="ECO:0000255" key="2"/>
<evidence type="ECO:0000305" key="3"/>